<proteinExistence type="inferred from homology"/>
<accession>Q7N6G6</accession>
<evidence type="ECO:0000255" key="1">
    <source>
        <dbReference type="HAMAP-Rule" id="MF_01012"/>
    </source>
</evidence>
<protein>
    <recommendedName>
        <fullName evidence="1">23S rRNA (uracil(747)-C(5))-methyltransferase RlmC</fullName>
        <ecNumber evidence="1">2.1.1.189</ecNumber>
    </recommendedName>
    <alternativeName>
        <fullName evidence="1">23S rRNA(m5U747)-methyltransferase</fullName>
    </alternativeName>
</protein>
<keyword id="KW-0004">4Fe-4S</keyword>
<keyword id="KW-0408">Iron</keyword>
<keyword id="KW-0411">Iron-sulfur</keyword>
<keyword id="KW-0479">Metal-binding</keyword>
<keyword id="KW-0489">Methyltransferase</keyword>
<keyword id="KW-1185">Reference proteome</keyword>
<keyword id="KW-0698">rRNA processing</keyword>
<keyword id="KW-0949">S-adenosyl-L-methionine</keyword>
<keyword id="KW-0808">Transferase</keyword>
<organism>
    <name type="scientific">Photorhabdus laumondii subsp. laumondii (strain DSM 15139 / CIP 105565 / TT01)</name>
    <name type="common">Photorhabdus luminescens subsp. laumondii</name>
    <dbReference type="NCBI Taxonomy" id="243265"/>
    <lineage>
        <taxon>Bacteria</taxon>
        <taxon>Pseudomonadati</taxon>
        <taxon>Pseudomonadota</taxon>
        <taxon>Gammaproteobacteria</taxon>
        <taxon>Enterobacterales</taxon>
        <taxon>Morganellaceae</taxon>
        <taxon>Photorhabdus</taxon>
    </lineage>
</organism>
<comment type="function">
    <text evidence="1">Catalyzes the formation of 5-methyl-uridine at position 747 (m5U747) in 23S rRNA.</text>
</comment>
<comment type="catalytic activity">
    <reaction evidence="1">
        <text>uridine(747) in 23S rRNA + S-adenosyl-L-methionine = 5-methyluridine(747) in 23S rRNA + S-adenosyl-L-homocysteine + H(+)</text>
        <dbReference type="Rhea" id="RHEA:42628"/>
        <dbReference type="Rhea" id="RHEA-COMP:10154"/>
        <dbReference type="Rhea" id="RHEA-COMP:10155"/>
        <dbReference type="ChEBI" id="CHEBI:15378"/>
        <dbReference type="ChEBI" id="CHEBI:57856"/>
        <dbReference type="ChEBI" id="CHEBI:59789"/>
        <dbReference type="ChEBI" id="CHEBI:65315"/>
        <dbReference type="ChEBI" id="CHEBI:74447"/>
        <dbReference type="EC" id="2.1.1.189"/>
    </reaction>
</comment>
<comment type="similarity">
    <text evidence="1">Belongs to the class I-like SAM-binding methyltransferase superfamily. RNA M5U methyltransferase family. RlmC subfamily.</text>
</comment>
<sequence length="377" mass="42686">MQCAHYSAGHCHSCQWLEKPYSQQLEDKQQNLKQLLPQAIVKQWLPPIASQQDAFRNKAKMVVSGSVERPLLGMLHRDGTAVDLCHCPLYPAHFQPVFDVVKSFIACAGLTPYNVARKRGELKYLLLTESRHSGEMMLRFVLRSETKIAQLERALPRLHEQLPQLTVISANIQPIHMAILEGEKEILFTEQKAFKEQFNGIPLYIRPHSFFQTNPKMASELYATAGRWVRELKISSMWDLFCGVGGFGLHCADKNTCLTGIEISSEAIDCARDSAKTLGLENIEFQALDSTHFAVAKDQIPQLVLVNPPRRGIGKVLCDYLSKMVPDYILYSSCNAQTMAKDIAALANYRVEKTQLFDMFPHTEHYEVLTLLVLNHN</sequence>
<feature type="chain" id="PRO_0000161933" description="23S rRNA (uracil(747)-C(5))-methyltransferase RlmC">
    <location>
        <begin position="1"/>
        <end position="377"/>
    </location>
</feature>
<feature type="active site" description="Nucleophile" evidence="1">
    <location>
        <position position="334"/>
    </location>
</feature>
<feature type="binding site" evidence="1">
    <location>
        <position position="3"/>
    </location>
    <ligand>
        <name>[4Fe-4S] cluster</name>
        <dbReference type="ChEBI" id="CHEBI:49883"/>
    </ligand>
</feature>
<feature type="binding site" evidence="1">
    <location>
        <position position="11"/>
    </location>
    <ligand>
        <name>[4Fe-4S] cluster</name>
        <dbReference type="ChEBI" id="CHEBI:49883"/>
    </ligand>
</feature>
<feature type="binding site" evidence="1">
    <location>
        <position position="14"/>
    </location>
    <ligand>
        <name>[4Fe-4S] cluster</name>
        <dbReference type="ChEBI" id="CHEBI:49883"/>
    </ligand>
</feature>
<feature type="binding site" evidence="1">
    <location>
        <position position="87"/>
    </location>
    <ligand>
        <name>[4Fe-4S] cluster</name>
        <dbReference type="ChEBI" id="CHEBI:49883"/>
    </ligand>
</feature>
<feature type="binding site" evidence="1">
    <location>
        <position position="212"/>
    </location>
    <ligand>
        <name>S-adenosyl-L-methionine</name>
        <dbReference type="ChEBI" id="CHEBI:59789"/>
    </ligand>
</feature>
<feature type="binding site" evidence="1">
    <location>
        <position position="241"/>
    </location>
    <ligand>
        <name>S-adenosyl-L-methionine</name>
        <dbReference type="ChEBI" id="CHEBI:59789"/>
    </ligand>
</feature>
<feature type="binding site" evidence="1">
    <location>
        <position position="262"/>
    </location>
    <ligand>
        <name>S-adenosyl-L-methionine</name>
        <dbReference type="ChEBI" id="CHEBI:59789"/>
    </ligand>
</feature>
<feature type="binding site" evidence="1">
    <location>
        <position position="307"/>
    </location>
    <ligand>
        <name>S-adenosyl-L-methionine</name>
        <dbReference type="ChEBI" id="CHEBI:59789"/>
    </ligand>
</feature>
<dbReference type="EC" id="2.1.1.189" evidence="1"/>
<dbReference type="EMBL" id="BX571864">
    <property type="protein sequence ID" value="CAE13877.1"/>
    <property type="molecule type" value="Genomic_DNA"/>
</dbReference>
<dbReference type="RefSeq" id="WP_011145881.1">
    <property type="nucleotide sequence ID" value="NC_005126.1"/>
</dbReference>
<dbReference type="SMR" id="Q7N6G6"/>
<dbReference type="STRING" id="243265.plu1584"/>
<dbReference type="GeneID" id="48847872"/>
<dbReference type="KEGG" id="plu:plu1584"/>
<dbReference type="eggNOG" id="COG2265">
    <property type="taxonomic scope" value="Bacteria"/>
</dbReference>
<dbReference type="HOGENOM" id="CLU_014689_0_0_6"/>
<dbReference type="OrthoDB" id="9804590at2"/>
<dbReference type="Proteomes" id="UP000002514">
    <property type="component" value="Chromosome"/>
</dbReference>
<dbReference type="GO" id="GO:0051539">
    <property type="term" value="F:4 iron, 4 sulfur cluster binding"/>
    <property type="evidence" value="ECO:0007669"/>
    <property type="project" value="UniProtKB-KW"/>
</dbReference>
<dbReference type="GO" id="GO:0005506">
    <property type="term" value="F:iron ion binding"/>
    <property type="evidence" value="ECO:0007669"/>
    <property type="project" value="UniProtKB-UniRule"/>
</dbReference>
<dbReference type="GO" id="GO:0070041">
    <property type="term" value="F:rRNA (uridine-C5-)-methyltransferase activity"/>
    <property type="evidence" value="ECO:0007669"/>
    <property type="project" value="UniProtKB-UniRule"/>
</dbReference>
<dbReference type="GO" id="GO:0070475">
    <property type="term" value="P:rRNA base methylation"/>
    <property type="evidence" value="ECO:0007669"/>
    <property type="project" value="TreeGrafter"/>
</dbReference>
<dbReference type="CDD" id="cd02440">
    <property type="entry name" value="AdoMet_MTases"/>
    <property type="match status" value="1"/>
</dbReference>
<dbReference type="FunFam" id="2.40.50.1070:FF:000002">
    <property type="entry name" value="23S rRNA (uracil(747)-C(5))-methyltransferase RlmC"/>
    <property type="match status" value="1"/>
</dbReference>
<dbReference type="Gene3D" id="2.40.50.1070">
    <property type="match status" value="1"/>
</dbReference>
<dbReference type="Gene3D" id="3.40.50.150">
    <property type="entry name" value="Vaccinia Virus protein VP39"/>
    <property type="match status" value="1"/>
</dbReference>
<dbReference type="HAMAP" id="MF_01012">
    <property type="entry name" value="23SrRNA_methyltr_RlmC"/>
    <property type="match status" value="1"/>
</dbReference>
<dbReference type="InterPro" id="IPR011825">
    <property type="entry name" value="23SrRNA_MeTrfase_RlmC"/>
</dbReference>
<dbReference type="InterPro" id="IPR030390">
    <property type="entry name" value="MeTrfase_TrmA_AS"/>
</dbReference>
<dbReference type="InterPro" id="IPR030391">
    <property type="entry name" value="MeTrfase_TrmA_CS"/>
</dbReference>
<dbReference type="InterPro" id="IPR029063">
    <property type="entry name" value="SAM-dependent_MTases_sf"/>
</dbReference>
<dbReference type="InterPro" id="IPR010280">
    <property type="entry name" value="U5_MeTrfase_fam"/>
</dbReference>
<dbReference type="NCBIfam" id="TIGR02085">
    <property type="entry name" value="meth_trns_rumB"/>
    <property type="match status" value="1"/>
</dbReference>
<dbReference type="NCBIfam" id="TIGR00479">
    <property type="entry name" value="rumA"/>
    <property type="match status" value="1"/>
</dbReference>
<dbReference type="PANTHER" id="PTHR11061">
    <property type="entry name" value="RNA M5U METHYLTRANSFERASE"/>
    <property type="match status" value="1"/>
</dbReference>
<dbReference type="PANTHER" id="PTHR11061:SF30">
    <property type="entry name" value="TRNA (URACIL(54)-C(5))-METHYLTRANSFERASE"/>
    <property type="match status" value="1"/>
</dbReference>
<dbReference type="Pfam" id="PF05958">
    <property type="entry name" value="tRNA_U5-meth_tr"/>
    <property type="match status" value="1"/>
</dbReference>
<dbReference type="SUPFAM" id="SSF53335">
    <property type="entry name" value="S-adenosyl-L-methionine-dependent methyltransferases"/>
    <property type="match status" value="1"/>
</dbReference>
<dbReference type="PROSITE" id="PS51687">
    <property type="entry name" value="SAM_MT_RNA_M5U"/>
    <property type="match status" value="1"/>
</dbReference>
<dbReference type="PROSITE" id="PS01230">
    <property type="entry name" value="TRMA_1"/>
    <property type="match status" value="1"/>
</dbReference>
<dbReference type="PROSITE" id="PS01231">
    <property type="entry name" value="TRMA_2"/>
    <property type="match status" value="1"/>
</dbReference>
<name>RLMC_PHOLL</name>
<gene>
    <name evidence="1" type="primary">rlmC</name>
    <name type="synonym">rumB</name>
    <name type="ordered locus">plu1584</name>
</gene>
<reference key="1">
    <citation type="journal article" date="2003" name="Nat. Biotechnol.">
        <title>The genome sequence of the entomopathogenic bacterium Photorhabdus luminescens.</title>
        <authorList>
            <person name="Duchaud E."/>
            <person name="Rusniok C."/>
            <person name="Frangeul L."/>
            <person name="Buchrieser C."/>
            <person name="Givaudan A."/>
            <person name="Taourit S."/>
            <person name="Bocs S."/>
            <person name="Boursaux-Eude C."/>
            <person name="Chandler M."/>
            <person name="Charles J.-F."/>
            <person name="Dassa E."/>
            <person name="Derose R."/>
            <person name="Derzelle S."/>
            <person name="Freyssinet G."/>
            <person name="Gaudriault S."/>
            <person name="Medigue C."/>
            <person name="Lanois A."/>
            <person name="Powell K."/>
            <person name="Siguier P."/>
            <person name="Vincent R."/>
            <person name="Wingate V."/>
            <person name="Zouine M."/>
            <person name="Glaser P."/>
            <person name="Boemare N."/>
            <person name="Danchin A."/>
            <person name="Kunst F."/>
        </authorList>
    </citation>
    <scope>NUCLEOTIDE SEQUENCE [LARGE SCALE GENOMIC DNA]</scope>
    <source>
        <strain>DSM 15139 / CIP 105565 / TT01</strain>
    </source>
</reference>